<keyword id="KW-0472">Membrane</keyword>
<keyword id="KW-0520">NAD</keyword>
<keyword id="KW-0521">NADP</keyword>
<keyword id="KW-0618">Plastoquinone</keyword>
<keyword id="KW-0874">Quinone</keyword>
<keyword id="KW-1185">Reference proteome</keyword>
<keyword id="KW-0793">Thylakoid</keyword>
<keyword id="KW-1278">Translocase</keyword>
<keyword id="KW-0812">Transmembrane</keyword>
<keyword id="KW-1133">Transmembrane helix</keyword>
<keyword id="KW-0813">Transport</keyword>
<evidence type="ECO:0000255" key="1">
    <source>
        <dbReference type="HAMAP-Rule" id="MF_01355"/>
    </source>
</evidence>
<sequence length="78" mass="9142">MANEVFNSSLFVIGTYLFLGTLYLVFIPLGLYFWMNTRWNYMGKIERLLIYSLVFLFFPGLILFAPFLNLRMNGQGDV</sequence>
<reference key="1">
    <citation type="journal article" date="2003" name="Proc. Natl. Acad. Sci. U.S.A.">
        <title>Genome sequence of the cyanobacterium Prochlorococcus marinus SS120, a nearly minimal oxyphototrophic genome.</title>
        <authorList>
            <person name="Dufresne A."/>
            <person name="Salanoubat M."/>
            <person name="Partensky F."/>
            <person name="Artiguenave F."/>
            <person name="Axmann I.M."/>
            <person name="Barbe V."/>
            <person name="Duprat S."/>
            <person name="Galperin M.Y."/>
            <person name="Koonin E.V."/>
            <person name="Le Gall F."/>
            <person name="Makarova K.S."/>
            <person name="Ostrowski M."/>
            <person name="Oztas S."/>
            <person name="Robert C."/>
            <person name="Rogozin I.B."/>
            <person name="Scanlan D.J."/>
            <person name="Tandeau de Marsac N."/>
            <person name="Weissenbach J."/>
            <person name="Wincker P."/>
            <person name="Wolf Y.I."/>
            <person name="Hess W.R."/>
        </authorList>
    </citation>
    <scope>NUCLEOTIDE SEQUENCE [LARGE SCALE GENOMIC DNA]</scope>
    <source>
        <strain>SARG / CCMP1375 / SS120</strain>
    </source>
</reference>
<dbReference type="EC" id="7.1.1.-" evidence="1"/>
<dbReference type="EMBL" id="AE017126">
    <property type="protein sequence ID" value="AAP99617.1"/>
    <property type="molecule type" value="Genomic_DNA"/>
</dbReference>
<dbReference type="RefSeq" id="NP_874965.1">
    <property type="nucleotide sequence ID" value="NC_005042.1"/>
</dbReference>
<dbReference type="RefSeq" id="WP_011124725.1">
    <property type="nucleotide sequence ID" value="NC_005042.1"/>
</dbReference>
<dbReference type="SMR" id="Q7VD17"/>
<dbReference type="STRING" id="167539.Pro_0572"/>
<dbReference type="EnsemblBacteria" id="AAP99617">
    <property type="protein sequence ID" value="AAP99617"/>
    <property type="gene ID" value="Pro_0572"/>
</dbReference>
<dbReference type="KEGG" id="pma:Pro_0572"/>
<dbReference type="PATRIC" id="fig|167539.5.peg.587"/>
<dbReference type="eggNOG" id="ENOG5030RAT">
    <property type="taxonomic scope" value="Bacteria"/>
</dbReference>
<dbReference type="HOGENOM" id="CLU_171077_1_0_3"/>
<dbReference type="OrthoDB" id="517549at2"/>
<dbReference type="Proteomes" id="UP000001420">
    <property type="component" value="Chromosome"/>
</dbReference>
<dbReference type="GO" id="GO:0031676">
    <property type="term" value="C:plasma membrane-derived thylakoid membrane"/>
    <property type="evidence" value="ECO:0007669"/>
    <property type="project" value="UniProtKB-SubCell"/>
</dbReference>
<dbReference type="GO" id="GO:0016655">
    <property type="term" value="F:oxidoreductase activity, acting on NAD(P)H, quinone or similar compound as acceptor"/>
    <property type="evidence" value="ECO:0007669"/>
    <property type="project" value="UniProtKB-UniRule"/>
</dbReference>
<dbReference type="GO" id="GO:0048038">
    <property type="term" value="F:quinone binding"/>
    <property type="evidence" value="ECO:0007669"/>
    <property type="project" value="UniProtKB-KW"/>
</dbReference>
<dbReference type="HAMAP" id="MF_01355">
    <property type="entry name" value="NDH1_NDH1L"/>
    <property type="match status" value="1"/>
</dbReference>
<dbReference type="InterPro" id="IPR019654">
    <property type="entry name" value="NADH-quinone_OxRdatse_su_L"/>
</dbReference>
<dbReference type="Pfam" id="PF10716">
    <property type="entry name" value="NdhL"/>
    <property type="match status" value="1"/>
</dbReference>
<feature type="chain" id="PRO_0000353671" description="NAD(P)H-quinone oxidoreductase subunit L">
    <location>
        <begin position="1"/>
        <end position="78"/>
    </location>
</feature>
<feature type="transmembrane region" description="Helical" evidence="1">
    <location>
        <begin position="10"/>
        <end position="30"/>
    </location>
</feature>
<feature type="transmembrane region" description="Helical" evidence="1">
    <location>
        <begin position="48"/>
        <end position="68"/>
    </location>
</feature>
<proteinExistence type="inferred from homology"/>
<organism>
    <name type="scientific">Prochlorococcus marinus (strain SARG / CCMP1375 / SS120)</name>
    <dbReference type="NCBI Taxonomy" id="167539"/>
    <lineage>
        <taxon>Bacteria</taxon>
        <taxon>Bacillati</taxon>
        <taxon>Cyanobacteriota</taxon>
        <taxon>Cyanophyceae</taxon>
        <taxon>Synechococcales</taxon>
        <taxon>Prochlorococcaceae</taxon>
        <taxon>Prochlorococcus</taxon>
    </lineage>
</organism>
<protein>
    <recommendedName>
        <fullName evidence="1">NAD(P)H-quinone oxidoreductase subunit L</fullName>
        <ecNumber evidence="1">7.1.1.-</ecNumber>
    </recommendedName>
    <alternativeName>
        <fullName evidence="1">NAD(P)H dehydrogenase I subunit L</fullName>
    </alternativeName>
    <alternativeName>
        <fullName>NDH-1 subunit L</fullName>
    </alternativeName>
    <alternativeName>
        <fullName>NDH-L</fullName>
    </alternativeName>
</protein>
<gene>
    <name evidence="1" type="primary">ndhL</name>
    <name type="ordered locus">Pro_0572</name>
</gene>
<accession>Q7VD17</accession>
<name>NDHL_PROMA</name>
<comment type="function">
    <text evidence="1">NDH-1 shuttles electrons from an unknown electron donor, via FMN and iron-sulfur (Fe-S) centers, to quinones in the respiratory and/or the photosynthetic chain. The immediate electron acceptor for the enzyme in this species is believed to be plastoquinone. Couples the redox reaction to proton translocation, and thus conserves the redox energy in a proton gradient. Cyanobacterial NDH-1 also plays a role in inorganic carbon-concentration.</text>
</comment>
<comment type="catalytic activity">
    <reaction evidence="1">
        <text>a plastoquinone + NADH + (n+1) H(+)(in) = a plastoquinol + NAD(+) + n H(+)(out)</text>
        <dbReference type="Rhea" id="RHEA:42608"/>
        <dbReference type="Rhea" id="RHEA-COMP:9561"/>
        <dbReference type="Rhea" id="RHEA-COMP:9562"/>
        <dbReference type="ChEBI" id="CHEBI:15378"/>
        <dbReference type="ChEBI" id="CHEBI:17757"/>
        <dbReference type="ChEBI" id="CHEBI:57540"/>
        <dbReference type="ChEBI" id="CHEBI:57945"/>
        <dbReference type="ChEBI" id="CHEBI:62192"/>
    </reaction>
</comment>
<comment type="catalytic activity">
    <reaction evidence="1">
        <text>a plastoquinone + NADPH + (n+1) H(+)(in) = a plastoquinol + NADP(+) + n H(+)(out)</text>
        <dbReference type="Rhea" id="RHEA:42612"/>
        <dbReference type="Rhea" id="RHEA-COMP:9561"/>
        <dbReference type="Rhea" id="RHEA-COMP:9562"/>
        <dbReference type="ChEBI" id="CHEBI:15378"/>
        <dbReference type="ChEBI" id="CHEBI:17757"/>
        <dbReference type="ChEBI" id="CHEBI:57783"/>
        <dbReference type="ChEBI" id="CHEBI:58349"/>
        <dbReference type="ChEBI" id="CHEBI:62192"/>
    </reaction>
</comment>
<comment type="subunit">
    <text evidence="1">NDH-1 can be composed of about 15 different subunits; different subcomplexes with different compositions have been identified which probably have different functions.</text>
</comment>
<comment type="subcellular location">
    <subcellularLocation>
        <location evidence="1">Cellular thylakoid membrane</location>
        <topology evidence="1">Multi-pass membrane protein</topology>
    </subcellularLocation>
</comment>
<comment type="similarity">
    <text evidence="1">Belongs to the complex I NdhL subunit family.</text>
</comment>